<gene>
    <name evidence="1" type="primary">ligA</name>
    <name type="ordered locus">Bamb_2057</name>
</gene>
<proteinExistence type="inferred from homology"/>
<comment type="function">
    <text evidence="1">DNA ligase that catalyzes the formation of phosphodiester linkages between 5'-phosphoryl and 3'-hydroxyl groups in double-stranded DNA using NAD as a coenzyme and as the energy source for the reaction. It is essential for DNA replication and repair of damaged DNA.</text>
</comment>
<comment type="catalytic activity">
    <reaction evidence="1">
        <text>NAD(+) + (deoxyribonucleotide)n-3'-hydroxyl + 5'-phospho-(deoxyribonucleotide)m = (deoxyribonucleotide)n+m + AMP + beta-nicotinamide D-nucleotide.</text>
        <dbReference type="EC" id="6.5.1.2"/>
    </reaction>
</comment>
<comment type="cofactor">
    <cofactor evidence="1">
        <name>Mg(2+)</name>
        <dbReference type="ChEBI" id="CHEBI:18420"/>
    </cofactor>
    <cofactor evidence="1">
        <name>Mn(2+)</name>
        <dbReference type="ChEBI" id="CHEBI:29035"/>
    </cofactor>
</comment>
<comment type="similarity">
    <text evidence="1">Belongs to the NAD-dependent DNA ligase family. LigA subfamily.</text>
</comment>
<organism>
    <name type="scientific">Burkholderia ambifaria (strain ATCC BAA-244 / DSM 16087 / CCUG 44356 / LMG 19182 / AMMD)</name>
    <name type="common">Burkholderia cepacia (strain AMMD)</name>
    <dbReference type="NCBI Taxonomy" id="339670"/>
    <lineage>
        <taxon>Bacteria</taxon>
        <taxon>Pseudomonadati</taxon>
        <taxon>Pseudomonadota</taxon>
        <taxon>Betaproteobacteria</taxon>
        <taxon>Burkholderiales</taxon>
        <taxon>Burkholderiaceae</taxon>
        <taxon>Burkholderia</taxon>
        <taxon>Burkholderia cepacia complex</taxon>
    </lineage>
</organism>
<reference key="1">
    <citation type="submission" date="2006-08" db="EMBL/GenBank/DDBJ databases">
        <title>Complete sequence of chromosome 1 of Burkholderia cepacia AMMD.</title>
        <authorList>
            <person name="Copeland A."/>
            <person name="Lucas S."/>
            <person name="Lapidus A."/>
            <person name="Barry K."/>
            <person name="Detter J.C."/>
            <person name="Glavina del Rio T."/>
            <person name="Hammon N."/>
            <person name="Israni S."/>
            <person name="Pitluck S."/>
            <person name="Bruce D."/>
            <person name="Chain P."/>
            <person name="Malfatti S."/>
            <person name="Shin M."/>
            <person name="Vergez L."/>
            <person name="Schmutz J."/>
            <person name="Larimer F."/>
            <person name="Land M."/>
            <person name="Hauser L."/>
            <person name="Kyrpides N."/>
            <person name="Kim E."/>
            <person name="Parke J."/>
            <person name="Coenye T."/>
            <person name="Konstantinidis K."/>
            <person name="Ramette A."/>
            <person name="Tiedje J."/>
            <person name="Richardson P."/>
        </authorList>
    </citation>
    <scope>NUCLEOTIDE SEQUENCE [LARGE SCALE GENOMIC DNA]</scope>
    <source>
        <strain>ATCC BAA-244 / DSM 16087 / CCUG 44356 / LMG 19182 / AMMD</strain>
    </source>
</reference>
<feature type="chain" id="PRO_0000313160" description="DNA ligase">
    <location>
        <begin position="1"/>
        <end position="691"/>
    </location>
</feature>
<feature type="domain" description="BRCT" evidence="1">
    <location>
        <begin position="610"/>
        <end position="691"/>
    </location>
</feature>
<feature type="active site" description="N6-AMP-lysine intermediate" evidence="1">
    <location>
        <position position="132"/>
    </location>
</feature>
<feature type="binding site" evidence="1">
    <location>
        <begin position="41"/>
        <end position="45"/>
    </location>
    <ligand>
        <name>NAD(+)</name>
        <dbReference type="ChEBI" id="CHEBI:57540"/>
    </ligand>
</feature>
<feature type="binding site" evidence="1">
    <location>
        <begin position="90"/>
        <end position="91"/>
    </location>
    <ligand>
        <name>NAD(+)</name>
        <dbReference type="ChEBI" id="CHEBI:57540"/>
    </ligand>
</feature>
<feature type="binding site" evidence="1">
    <location>
        <position position="130"/>
    </location>
    <ligand>
        <name>NAD(+)</name>
        <dbReference type="ChEBI" id="CHEBI:57540"/>
    </ligand>
</feature>
<feature type="binding site" evidence="1">
    <location>
        <position position="153"/>
    </location>
    <ligand>
        <name>NAD(+)</name>
        <dbReference type="ChEBI" id="CHEBI:57540"/>
    </ligand>
</feature>
<feature type="binding site" evidence="1">
    <location>
        <position position="190"/>
    </location>
    <ligand>
        <name>NAD(+)</name>
        <dbReference type="ChEBI" id="CHEBI:57540"/>
    </ligand>
</feature>
<feature type="binding site" evidence="1">
    <location>
        <position position="307"/>
    </location>
    <ligand>
        <name>NAD(+)</name>
        <dbReference type="ChEBI" id="CHEBI:57540"/>
    </ligand>
</feature>
<feature type="binding site" evidence="1">
    <location>
        <position position="331"/>
    </location>
    <ligand>
        <name>NAD(+)</name>
        <dbReference type="ChEBI" id="CHEBI:57540"/>
    </ligand>
</feature>
<feature type="binding site" evidence="1">
    <location>
        <position position="425"/>
    </location>
    <ligand>
        <name>Zn(2+)</name>
        <dbReference type="ChEBI" id="CHEBI:29105"/>
    </ligand>
</feature>
<feature type="binding site" evidence="1">
    <location>
        <position position="428"/>
    </location>
    <ligand>
        <name>Zn(2+)</name>
        <dbReference type="ChEBI" id="CHEBI:29105"/>
    </ligand>
</feature>
<feature type="binding site" evidence="1">
    <location>
        <position position="443"/>
    </location>
    <ligand>
        <name>Zn(2+)</name>
        <dbReference type="ChEBI" id="CHEBI:29105"/>
    </ligand>
</feature>
<feature type="binding site" evidence="1">
    <location>
        <position position="449"/>
    </location>
    <ligand>
        <name>Zn(2+)</name>
        <dbReference type="ChEBI" id="CHEBI:29105"/>
    </ligand>
</feature>
<evidence type="ECO:0000255" key="1">
    <source>
        <dbReference type="HAMAP-Rule" id="MF_01588"/>
    </source>
</evidence>
<protein>
    <recommendedName>
        <fullName evidence="1">DNA ligase</fullName>
        <ecNumber evidence="1">6.5.1.2</ecNumber>
    </recommendedName>
    <alternativeName>
        <fullName evidence="1">Polydeoxyribonucleotide synthase [NAD(+)]</fullName>
    </alternativeName>
</protein>
<keyword id="KW-0227">DNA damage</keyword>
<keyword id="KW-0234">DNA repair</keyword>
<keyword id="KW-0235">DNA replication</keyword>
<keyword id="KW-0436">Ligase</keyword>
<keyword id="KW-0460">Magnesium</keyword>
<keyword id="KW-0464">Manganese</keyword>
<keyword id="KW-0479">Metal-binding</keyword>
<keyword id="KW-0520">NAD</keyword>
<keyword id="KW-0862">Zinc</keyword>
<accession>Q0BE10</accession>
<dbReference type="EC" id="6.5.1.2" evidence="1"/>
<dbReference type="EMBL" id="CP000440">
    <property type="protein sequence ID" value="ABI87613.1"/>
    <property type="molecule type" value="Genomic_DNA"/>
</dbReference>
<dbReference type="RefSeq" id="WP_011657289.1">
    <property type="nucleotide sequence ID" value="NC_008390.1"/>
</dbReference>
<dbReference type="SMR" id="Q0BE10"/>
<dbReference type="GeneID" id="93085745"/>
<dbReference type="KEGG" id="bam:Bamb_2057"/>
<dbReference type="PATRIC" id="fig|339670.21.peg.2885"/>
<dbReference type="eggNOG" id="COG0272">
    <property type="taxonomic scope" value="Bacteria"/>
</dbReference>
<dbReference type="Proteomes" id="UP000000662">
    <property type="component" value="Chromosome 1"/>
</dbReference>
<dbReference type="GO" id="GO:0005829">
    <property type="term" value="C:cytosol"/>
    <property type="evidence" value="ECO:0007669"/>
    <property type="project" value="TreeGrafter"/>
</dbReference>
<dbReference type="GO" id="GO:0003677">
    <property type="term" value="F:DNA binding"/>
    <property type="evidence" value="ECO:0007669"/>
    <property type="project" value="InterPro"/>
</dbReference>
<dbReference type="GO" id="GO:0003911">
    <property type="term" value="F:DNA ligase (NAD+) activity"/>
    <property type="evidence" value="ECO:0007669"/>
    <property type="project" value="UniProtKB-UniRule"/>
</dbReference>
<dbReference type="GO" id="GO:0046872">
    <property type="term" value="F:metal ion binding"/>
    <property type="evidence" value="ECO:0007669"/>
    <property type="project" value="UniProtKB-KW"/>
</dbReference>
<dbReference type="GO" id="GO:0006281">
    <property type="term" value="P:DNA repair"/>
    <property type="evidence" value="ECO:0007669"/>
    <property type="project" value="UniProtKB-KW"/>
</dbReference>
<dbReference type="GO" id="GO:0006260">
    <property type="term" value="P:DNA replication"/>
    <property type="evidence" value="ECO:0007669"/>
    <property type="project" value="UniProtKB-KW"/>
</dbReference>
<dbReference type="CDD" id="cd17748">
    <property type="entry name" value="BRCT_DNA_ligase_like"/>
    <property type="match status" value="1"/>
</dbReference>
<dbReference type="CDD" id="cd00114">
    <property type="entry name" value="LIGANc"/>
    <property type="match status" value="1"/>
</dbReference>
<dbReference type="FunFam" id="1.10.150.20:FF:000006">
    <property type="entry name" value="DNA ligase"/>
    <property type="match status" value="1"/>
</dbReference>
<dbReference type="FunFam" id="1.10.150.20:FF:000007">
    <property type="entry name" value="DNA ligase"/>
    <property type="match status" value="1"/>
</dbReference>
<dbReference type="FunFam" id="1.10.287.610:FF:000002">
    <property type="entry name" value="DNA ligase"/>
    <property type="match status" value="1"/>
</dbReference>
<dbReference type="FunFam" id="2.40.50.140:FF:000012">
    <property type="entry name" value="DNA ligase"/>
    <property type="match status" value="1"/>
</dbReference>
<dbReference type="FunFam" id="3.30.470.30:FF:000001">
    <property type="entry name" value="DNA ligase"/>
    <property type="match status" value="1"/>
</dbReference>
<dbReference type="FunFam" id="3.40.50.10190:FF:000054">
    <property type="entry name" value="DNA ligase"/>
    <property type="match status" value="1"/>
</dbReference>
<dbReference type="Gene3D" id="6.20.10.30">
    <property type="match status" value="1"/>
</dbReference>
<dbReference type="Gene3D" id="1.10.150.20">
    <property type="entry name" value="5' to 3' exonuclease, C-terminal subdomain"/>
    <property type="match status" value="2"/>
</dbReference>
<dbReference type="Gene3D" id="3.40.50.10190">
    <property type="entry name" value="BRCT domain"/>
    <property type="match status" value="1"/>
</dbReference>
<dbReference type="Gene3D" id="3.30.470.30">
    <property type="entry name" value="DNA ligase/mRNA capping enzyme"/>
    <property type="match status" value="1"/>
</dbReference>
<dbReference type="Gene3D" id="1.10.287.610">
    <property type="entry name" value="Helix hairpin bin"/>
    <property type="match status" value="1"/>
</dbReference>
<dbReference type="Gene3D" id="2.40.50.140">
    <property type="entry name" value="Nucleic acid-binding proteins"/>
    <property type="match status" value="1"/>
</dbReference>
<dbReference type="HAMAP" id="MF_01588">
    <property type="entry name" value="DNA_ligase_A"/>
    <property type="match status" value="1"/>
</dbReference>
<dbReference type="InterPro" id="IPR001357">
    <property type="entry name" value="BRCT_dom"/>
</dbReference>
<dbReference type="InterPro" id="IPR036420">
    <property type="entry name" value="BRCT_dom_sf"/>
</dbReference>
<dbReference type="InterPro" id="IPR041663">
    <property type="entry name" value="DisA/LigA_HHH"/>
</dbReference>
<dbReference type="InterPro" id="IPR001679">
    <property type="entry name" value="DNA_ligase"/>
</dbReference>
<dbReference type="InterPro" id="IPR018239">
    <property type="entry name" value="DNA_ligase_AS"/>
</dbReference>
<dbReference type="InterPro" id="IPR033136">
    <property type="entry name" value="DNA_ligase_CS"/>
</dbReference>
<dbReference type="InterPro" id="IPR013839">
    <property type="entry name" value="DNAligase_adenylation"/>
</dbReference>
<dbReference type="InterPro" id="IPR013840">
    <property type="entry name" value="DNAligase_N"/>
</dbReference>
<dbReference type="InterPro" id="IPR003583">
    <property type="entry name" value="Hlx-hairpin-Hlx_DNA-bd_motif"/>
</dbReference>
<dbReference type="InterPro" id="IPR012340">
    <property type="entry name" value="NA-bd_OB-fold"/>
</dbReference>
<dbReference type="InterPro" id="IPR004150">
    <property type="entry name" value="NAD_DNA_ligase_OB"/>
</dbReference>
<dbReference type="InterPro" id="IPR010994">
    <property type="entry name" value="RuvA_2-like"/>
</dbReference>
<dbReference type="InterPro" id="IPR004149">
    <property type="entry name" value="Znf_DNAligase_C4"/>
</dbReference>
<dbReference type="NCBIfam" id="TIGR00575">
    <property type="entry name" value="dnlj"/>
    <property type="match status" value="1"/>
</dbReference>
<dbReference type="NCBIfam" id="NF005932">
    <property type="entry name" value="PRK07956.1"/>
    <property type="match status" value="1"/>
</dbReference>
<dbReference type="PANTHER" id="PTHR23389">
    <property type="entry name" value="CHROMOSOME TRANSMISSION FIDELITY FACTOR 18"/>
    <property type="match status" value="1"/>
</dbReference>
<dbReference type="PANTHER" id="PTHR23389:SF9">
    <property type="entry name" value="DNA LIGASE"/>
    <property type="match status" value="1"/>
</dbReference>
<dbReference type="Pfam" id="PF00533">
    <property type="entry name" value="BRCT"/>
    <property type="match status" value="1"/>
</dbReference>
<dbReference type="Pfam" id="PF01653">
    <property type="entry name" value="DNA_ligase_aden"/>
    <property type="match status" value="1"/>
</dbReference>
<dbReference type="Pfam" id="PF03120">
    <property type="entry name" value="DNA_ligase_OB"/>
    <property type="match status" value="1"/>
</dbReference>
<dbReference type="Pfam" id="PF03119">
    <property type="entry name" value="DNA_ligase_ZBD"/>
    <property type="match status" value="1"/>
</dbReference>
<dbReference type="Pfam" id="PF12826">
    <property type="entry name" value="HHH_2"/>
    <property type="match status" value="1"/>
</dbReference>
<dbReference type="Pfam" id="PF14520">
    <property type="entry name" value="HHH_5"/>
    <property type="match status" value="1"/>
</dbReference>
<dbReference type="Pfam" id="PF22745">
    <property type="entry name" value="Nlig-Ia"/>
    <property type="match status" value="1"/>
</dbReference>
<dbReference type="PIRSF" id="PIRSF001604">
    <property type="entry name" value="LigA"/>
    <property type="match status" value="1"/>
</dbReference>
<dbReference type="SMART" id="SM00292">
    <property type="entry name" value="BRCT"/>
    <property type="match status" value="1"/>
</dbReference>
<dbReference type="SMART" id="SM00278">
    <property type="entry name" value="HhH1"/>
    <property type="match status" value="3"/>
</dbReference>
<dbReference type="SMART" id="SM00532">
    <property type="entry name" value="LIGANc"/>
    <property type="match status" value="1"/>
</dbReference>
<dbReference type="SUPFAM" id="SSF52113">
    <property type="entry name" value="BRCT domain"/>
    <property type="match status" value="1"/>
</dbReference>
<dbReference type="SUPFAM" id="SSF56091">
    <property type="entry name" value="DNA ligase/mRNA capping enzyme, catalytic domain"/>
    <property type="match status" value="1"/>
</dbReference>
<dbReference type="SUPFAM" id="SSF50249">
    <property type="entry name" value="Nucleic acid-binding proteins"/>
    <property type="match status" value="1"/>
</dbReference>
<dbReference type="SUPFAM" id="SSF47781">
    <property type="entry name" value="RuvA domain 2-like"/>
    <property type="match status" value="1"/>
</dbReference>
<dbReference type="PROSITE" id="PS50172">
    <property type="entry name" value="BRCT"/>
    <property type="match status" value="1"/>
</dbReference>
<dbReference type="PROSITE" id="PS01055">
    <property type="entry name" value="DNA_LIGASE_N1"/>
    <property type="match status" value="1"/>
</dbReference>
<dbReference type="PROSITE" id="PS01056">
    <property type="entry name" value="DNA_LIGASE_N2"/>
    <property type="match status" value="1"/>
</dbReference>
<name>DNLJ_BURCM</name>
<sequence>MARTQAEPPASQPDARAAWLRDQLERANYAYYVLDQPDLPDAEYDRLFGELQQLETDHPDLVTPDSPTQRVGGEVAGGFTPVVHDAPMLSLNNGFADEDIAAFDKRVADALGKTTDLAGSVTDPVEYACELKFDGLAISLRYEHGVFVQASTRGDGTTGEDVTENVRTIRSIPLKLKGAHVPALLDVRGEVLMFKRDFARLNERQRAAEQREFANPRNAAAGSLRQLDPKITAQRPLSFFAYGIGVLDGMPMPDTHSALLDWYESFGLPVNRERAVVYGADGLLGFFRKVGEKRESLPYDIDGVVYKVNRRDEQDRLGFVSRAPRFALAHKFPAQEALTRLVAIDVQVGRTGAITPVARLEPVFVGGATVTNATLHNEDEVRRKDIRIGDTVIVRRAGDVIPEVVGALLDRRPDDAAEFVMPTECPVCGSKIERLPDEAIARCTGGLFCPAQRKQALWHFAQRRALDIDGLGEKIIDQLVELNLVRTPADLFNLGFATLAELDRFAEKSAQNLLDSLEKAKHTTLARFIYGLGIRHVGESTAKDLAKHFGSLTPIMDASIEELLEVNDVGPIVAESIHQFFAEEHNRTVIEQLRAPGKVTWAEGPPAPRAPQGVLAGKTVVLTGTLPNLTRDAAKEMLEAAGAKVAGSVSKKTDYVVAGADAGSKLAKAEELGIPVLDEDGLHQLLEGNTP</sequence>